<proteinExistence type="inferred from homology"/>
<organism>
    <name type="scientific">Alkaliphilus oremlandii (strain OhILAs)</name>
    <name type="common">Clostridium oremlandii (strain OhILAs)</name>
    <dbReference type="NCBI Taxonomy" id="350688"/>
    <lineage>
        <taxon>Bacteria</taxon>
        <taxon>Bacillati</taxon>
        <taxon>Bacillota</taxon>
        <taxon>Clostridia</taxon>
        <taxon>Peptostreptococcales</taxon>
        <taxon>Natronincolaceae</taxon>
        <taxon>Alkaliphilus</taxon>
    </lineage>
</organism>
<feature type="chain" id="PRO_1000084542" description="tRNA pseudouridine synthase B">
    <location>
        <begin position="1"/>
        <end position="299"/>
    </location>
</feature>
<feature type="active site" description="Nucleophile" evidence="1">
    <location>
        <position position="38"/>
    </location>
</feature>
<reference key="1">
    <citation type="submission" date="2007-10" db="EMBL/GenBank/DDBJ databases">
        <title>Complete genome of Alkaliphilus oremlandii OhILAs.</title>
        <authorList>
            <person name="Copeland A."/>
            <person name="Lucas S."/>
            <person name="Lapidus A."/>
            <person name="Barry K."/>
            <person name="Detter J.C."/>
            <person name="Glavina del Rio T."/>
            <person name="Hammon N."/>
            <person name="Israni S."/>
            <person name="Dalin E."/>
            <person name="Tice H."/>
            <person name="Pitluck S."/>
            <person name="Chain P."/>
            <person name="Malfatti S."/>
            <person name="Shin M."/>
            <person name="Vergez L."/>
            <person name="Schmutz J."/>
            <person name="Larimer F."/>
            <person name="Land M."/>
            <person name="Hauser L."/>
            <person name="Kyrpides N."/>
            <person name="Mikhailova N."/>
            <person name="Stolz J.F."/>
            <person name="Dawson A."/>
            <person name="Fisher E."/>
            <person name="Crable B."/>
            <person name="Perera E."/>
            <person name="Lisak J."/>
            <person name="Ranganathan M."/>
            <person name="Basu P."/>
            <person name="Richardson P."/>
        </authorList>
    </citation>
    <scope>NUCLEOTIDE SEQUENCE [LARGE SCALE GENOMIC DNA]</scope>
    <source>
        <strain>OhILAs</strain>
    </source>
</reference>
<name>TRUB_ALKOO</name>
<comment type="function">
    <text evidence="1">Responsible for synthesis of pseudouridine from uracil-55 in the psi GC loop of transfer RNAs.</text>
</comment>
<comment type="catalytic activity">
    <reaction evidence="1">
        <text>uridine(55) in tRNA = pseudouridine(55) in tRNA</text>
        <dbReference type="Rhea" id="RHEA:42532"/>
        <dbReference type="Rhea" id="RHEA-COMP:10101"/>
        <dbReference type="Rhea" id="RHEA-COMP:10102"/>
        <dbReference type="ChEBI" id="CHEBI:65314"/>
        <dbReference type="ChEBI" id="CHEBI:65315"/>
        <dbReference type="EC" id="5.4.99.25"/>
    </reaction>
</comment>
<comment type="similarity">
    <text evidence="1">Belongs to the pseudouridine synthase TruB family. Type 1 subfamily.</text>
</comment>
<keyword id="KW-0413">Isomerase</keyword>
<keyword id="KW-1185">Reference proteome</keyword>
<keyword id="KW-0819">tRNA processing</keyword>
<dbReference type="EC" id="5.4.99.25" evidence="1"/>
<dbReference type="EMBL" id="CP000853">
    <property type="protein sequence ID" value="ABW19074.1"/>
    <property type="molecule type" value="Genomic_DNA"/>
</dbReference>
<dbReference type="SMR" id="A8MFB1"/>
<dbReference type="STRING" id="350688.Clos_1531"/>
<dbReference type="KEGG" id="aoe:Clos_1531"/>
<dbReference type="eggNOG" id="COG0130">
    <property type="taxonomic scope" value="Bacteria"/>
</dbReference>
<dbReference type="HOGENOM" id="CLU_032087_0_1_9"/>
<dbReference type="OrthoDB" id="9802309at2"/>
<dbReference type="Proteomes" id="UP000000269">
    <property type="component" value="Chromosome"/>
</dbReference>
<dbReference type="GO" id="GO:0003723">
    <property type="term" value="F:RNA binding"/>
    <property type="evidence" value="ECO:0007669"/>
    <property type="project" value="InterPro"/>
</dbReference>
<dbReference type="GO" id="GO:0160148">
    <property type="term" value="F:tRNA pseudouridine(55) synthase activity"/>
    <property type="evidence" value="ECO:0007669"/>
    <property type="project" value="UniProtKB-EC"/>
</dbReference>
<dbReference type="GO" id="GO:1990481">
    <property type="term" value="P:mRNA pseudouridine synthesis"/>
    <property type="evidence" value="ECO:0007669"/>
    <property type="project" value="TreeGrafter"/>
</dbReference>
<dbReference type="GO" id="GO:0031119">
    <property type="term" value="P:tRNA pseudouridine synthesis"/>
    <property type="evidence" value="ECO:0007669"/>
    <property type="project" value="UniProtKB-UniRule"/>
</dbReference>
<dbReference type="CDD" id="cd02573">
    <property type="entry name" value="PseudoU_synth_EcTruB"/>
    <property type="match status" value="1"/>
</dbReference>
<dbReference type="FunFam" id="3.30.2350.10:FF:000011">
    <property type="entry name" value="tRNA pseudouridine synthase B"/>
    <property type="match status" value="1"/>
</dbReference>
<dbReference type="Gene3D" id="3.30.2350.10">
    <property type="entry name" value="Pseudouridine synthase"/>
    <property type="match status" value="1"/>
</dbReference>
<dbReference type="HAMAP" id="MF_01080">
    <property type="entry name" value="TruB_bact"/>
    <property type="match status" value="1"/>
</dbReference>
<dbReference type="InterPro" id="IPR020103">
    <property type="entry name" value="PsdUridine_synth_cat_dom_sf"/>
</dbReference>
<dbReference type="InterPro" id="IPR002501">
    <property type="entry name" value="PsdUridine_synth_N"/>
</dbReference>
<dbReference type="InterPro" id="IPR014780">
    <property type="entry name" value="tRNA_psdUridine_synth_TruB"/>
</dbReference>
<dbReference type="InterPro" id="IPR032819">
    <property type="entry name" value="TruB_C"/>
</dbReference>
<dbReference type="NCBIfam" id="TIGR00431">
    <property type="entry name" value="TruB"/>
    <property type="match status" value="1"/>
</dbReference>
<dbReference type="PANTHER" id="PTHR13767:SF2">
    <property type="entry name" value="PSEUDOURIDYLATE SYNTHASE TRUB1"/>
    <property type="match status" value="1"/>
</dbReference>
<dbReference type="PANTHER" id="PTHR13767">
    <property type="entry name" value="TRNA-PSEUDOURIDINE SYNTHASE"/>
    <property type="match status" value="1"/>
</dbReference>
<dbReference type="Pfam" id="PF16198">
    <property type="entry name" value="TruB_C_2"/>
    <property type="match status" value="1"/>
</dbReference>
<dbReference type="Pfam" id="PF01509">
    <property type="entry name" value="TruB_N"/>
    <property type="match status" value="1"/>
</dbReference>
<dbReference type="SUPFAM" id="SSF55120">
    <property type="entry name" value="Pseudouridine synthase"/>
    <property type="match status" value="1"/>
</dbReference>
<sequence length="299" mass="33741">MNGILNILKPPGMTSHDVVSVVRKKLNMKKVGHTGTLDPNAAGVLPICIGQATKISQFLLDGKKKYRAELTLGIETNTEDIDGEILRQREVTSSPDEIREAVLSFIGEYKQIPPMYSAIKIKGKKLYELARQGVEIERAERTVTIYHIEIIEIFKEKVIFDVLCSKGTYIRTLCKDIGEVLGCGGVMSFLLRTASSDFSLDTAITIEELQALENVEDILLPMDYPLQHMSKAIVKSAYSKQVLNGNRIYSNYLIDTIHEPIGQEVCVYLEKEFVGFGIVRNEDHNQKYIKILRLLFEKE</sequence>
<protein>
    <recommendedName>
        <fullName evidence="1">tRNA pseudouridine synthase B</fullName>
        <ecNumber evidence="1">5.4.99.25</ecNumber>
    </recommendedName>
    <alternativeName>
        <fullName evidence="1">tRNA pseudouridine(55) synthase</fullName>
        <shortName evidence="1">Psi55 synthase</shortName>
    </alternativeName>
    <alternativeName>
        <fullName evidence="1">tRNA pseudouridylate synthase</fullName>
    </alternativeName>
    <alternativeName>
        <fullName evidence="1">tRNA-uridine isomerase</fullName>
    </alternativeName>
</protein>
<accession>A8MFB1</accession>
<evidence type="ECO:0000255" key="1">
    <source>
        <dbReference type="HAMAP-Rule" id="MF_01080"/>
    </source>
</evidence>
<gene>
    <name evidence="1" type="primary">truB</name>
    <name type="ordered locus">Clos_1531</name>
</gene>